<feature type="signal peptide" evidence="2">
    <location>
        <begin position="1"/>
        <end position="15"/>
    </location>
</feature>
<feature type="chain" id="PRO_0000032801" description="Membrane-bound lytic murein transglycosylase D">
    <location>
        <begin position="16"/>
        <end position="452"/>
    </location>
</feature>
<feature type="domain" description="LysM 1" evidence="3">
    <location>
        <begin position="341"/>
        <end position="384"/>
    </location>
</feature>
<feature type="domain" description="LysM 2" evidence="3">
    <location>
        <begin position="400"/>
        <end position="448"/>
    </location>
</feature>
<feature type="region of interest" description="Slt-type domain">
    <location>
        <begin position="113"/>
        <end position="198"/>
    </location>
</feature>
<feature type="active site" evidence="4">
    <location>
        <position position="125"/>
    </location>
</feature>
<feature type="lipid moiety-binding region" description="N-palmitoyl cysteine" evidence="2">
    <location>
        <position position="16"/>
    </location>
</feature>
<feature type="lipid moiety-binding region" description="S-diacylglycerol cysteine" evidence="2">
    <location>
        <position position="16"/>
    </location>
</feature>
<feature type="sequence conflict" description="In Ref. 5." evidence="5" ref="5">
    <original>MGIP</original>
    <variation>DGNS</variation>
    <location>
        <begin position="69"/>
        <end position="72"/>
    </location>
</feature>
<feature type="sequence conflict" description="In Ref. 5." evidence="5" ref="5">
    <original>D</original>
    <variation>A</variation>
    <location>
        <position position="217"/>
    </location>
</feature>
<feature type="strand" evidence="7">
    <location>
        <begin position="401"/>
        <end position="404"/>
    </location>
</feature>
<feature type="helix" evidence="7">
    <location>
        <begin position="410"/>
        <end position="416"/>
    </location>
</feature>
<feature type="helix" evidence="7">
    <location>
        <begin position="421"/>
        <end position="427"/>
    </location>
</feature>
<feature type="helix" evidence="7">
    <location>
        <begin position="431"/>
        <end position="433"/>
    </location>
</feature>
<feature type="strand" evidence="7">
    <location>
        <begin position="438"/>
        <end position="441"/>
    </location>
</feature>
<sequence>MKAKAILLASVLLVGCQSTGNVQQHAQSLSAAGQGEAAKFTSQARWMDDGTSIAPDGDLWAFIGDELKMGIPENDRIREQKQKYLRNKSYLHDVTLRAEPYMYWIAGQVKKRNMPMELVLLPIVESAFDPHATSGANAAGIWQIIPSTGRNYGLKQTRNYDARRDVVASTTAALNMMQRLNKMFDGDWLLTVAAYNSGEGRVMKAIKTNKARGKSTDFWSLPLPQETKQYVPKMLALSDILKNSKRYGVRLPTTDESRALARVHLSSPVEMAKVADMAGISVSKLKTFNAGVKGSTLGASGPQYVMVPKKHADQLRESLASGEIAAVQSTLVADNTPLNSRVYTVRSGDTLSSIASRLGVSTKDLQQWNKLRGSKLKPGQSLTIGAGSSAQRLANNSDSITYRVRKGDSLSSIAKRHGVNIKDVMRWNSDTANLQPGDKLTLFVKNNNMPDS</sequence>
<comment type="function">
    <text evidence="1">Murein-degrading enzyme. May play a role in recycling of muropeptides during cell elongation and/or cell division (By similarity).</text>
</comment>
<comment type="catalytic activity">
    <reaction>
        <text>Exolytic cleavage of the (1-&gt;4)-beta-glycosidic linkage between N-acetylmuramic acid (MurNAc) and N-acetylglucosamine (GlcNAc) residues in peptidoglycan, from either the reducing or the non-reducing ends of the peptidoglycan chains, with concomitant formation of a 1,6-anhydrobond in the MurNAc residue.</text>
        <dbReference type="EC" id="4.2.2.n1"/>
    </reaction>
</comment>
<comment type="subcellular location">
    <subcellularLocation>
        <location evidence="5">Cell membrane</location>
        <topology evidence="5">Lipid-anchor</topology>
    </subcellularLocation>
</comment>
<comment type="domain">
    <text>LysM domains are thought to be involved in peptidoglycan binding.</text>
</comment>
<comment type="similarity">
    <text evidence="5">Belongs to the transglycosylase Slt family.</text>
</comment>
<comment type="caution">
    <text evidence="6">Was originally thought to be involved in hexaheme nitrite reductase (cytochrome c552) expression.</text>
</comment>
<comment type="sequence caution" evidence="5">
    <conflict type="frameshift">
        <sequence resource="EMBL-CDS" id="CAA43144"/>
    </conflict>
</comment>
<protein>
    <recommendedName>
        <fullName>Membrane-bound lytic murein transglycosylase D</fullName>
        <ecNumber>4.2.2.n1</ecNumber>
    </recommendedName>
    <alternativeName>
        <fullName>Murein hydrolase D</fullName>
    </alternativeName>
    <alternativeName>
        <fullName>Regulatory protein DniR</fullName>
    </alternativeName>
</protein>
<dbReference type="EC" id="4.2.2.n1"/>
<dbReference type="EMBL" id="U70214">
    <property type="protein sequence ID" value="AAB08633.1"/>
    <property type="molecule type" value="Genomic_DNA"/>
</dbReference>
<dbReference type="EMBL" id="U00096">
    <property type="protein sequence ID" value="AAC73316.1"/>
    <property type="molecule type" value="Genomic_DNA"/>
</dbReference>
<dbReference type="EMBL" id="AP009048">
    <property type="protein sequence ID" value="BAA77882.2"/>
    <property type="molecule type" value="Genomic_DNA"/>
</dbReference>
<dbReference type="EMBL" id="X60739">
    <property type="protein sequence ID" value="CAA43144.1"/>
    <property type="status" value="ALT_FRAME"/>
    <property type="molecule type" value="Genomic_DNA"/>
</dbReference>
<dbReference type="PIR" id="E64745">
    <property type="entry name" value="E64745"/>
</dbReference>
<dbReference type="RefSeq" id="NP_414747.1">
    <property type="nucleotide sequence ID" value="NC_000913.3"/>
</dbReference>
<dbReference type="RefSeq" id="WP_000644685.1">
    <property type="nucleotide sequence ID" value="NZ_STEB01000020.1"/>
</dbReference>
<dbReference type="PDB" id="1E0G">
    <property type="method" value="NMR"/>
    <property type="chains" value="A=398-445"/>
</dbReference>
<dbReference type="PDBsum" id="1E0G"/>
<dbReference type="SMR" id="P0AEZ7"/>
<dbReference type="BioGRID" id="4261468">
    <property type="interactions" value="284"/>
</dbReference>
<dbReference type="DIP" id="DIP-48010N"/>
<dbReference type="FunCoup" id="P0AEZ7">
    <property type="interactions" value="181"/>
</dbReference>
<dbReference type="IntAct" id="P0AEZ7">
    <property type="interactions" value="5"/>
</dbReference>
<dbReference type="STRING" id="511145.b0211"/>
<dbReference type="PaxDb" id="511145-b0211"/>
<dbReference type="DNASU" id="945694"/>
<dbReference type="EnsemblBacteria" id="AAC73316">
    <property type="protein sequence ID" value="AAC73316"/>
    <property type="gene ID" value="b0211"/>
</dbReference>
<dbReference type="GeneID" id="93777212"/>
<dbReference type="GeneID" id="945694"/>
<dbReference type="KEGG" id="ecj:JW5018"/>
<dbReference type="KEGG" id="eco:b0211"/>
<dbReference type="KEGG" id="ecoc:C3026_00985"/>
<dbReference type="PATRIC" id="fig|511145.12.peg.213"/>
<dbReference type="EchoBASE" id="EB0242"/>
<dbReference type="eggNOG" id="COG0741">
    <property type="taxonomic scope" value="Bacteria"/>
</dbReference>
<dbReference type="eggNOG" id="COG1388">
    <property type="taxonomic scope" value="Bacteria"/>
</dbReference>
<dbReference type="HOGENOM" id="CLU_009520_1_4_6"/>
<dbReference type="InParanoid" id="P0AEZ7"/>
<dbReference type="OMA" id="PGFNRWA"/>
<dbReference type="OrthoDB" id="9815002at2"/>
<dbReference type="PhylomeDB" id="P0AEZ7"/>
<dbReference type="BioCyc" id="EcoCyc:EG10246-MONOMER"/>
<dbReference type="BioCyc" id="MetaCyc:EG10246-MONOMER"/>
<dbReference type="EvolutionaryTrace" id="P0AEZ7"/>
<dbReference type="PRO" id="PR:P0AEZ7"/>
<dbReference type="Proteomes" id="UP000000625">
    <property type="component" value="Chromosome"/>
</dbReference>
<dbReference type="GO" id="GO:0016020">
    <property type="term" value="C:membrane"/>
    <property type="evidence" value="ECO:0000303"/>
    <property type="project" value="EcoliWiki"/>
</dbReference>
<dbReference type="GO" id="GO:0005886">
    <property type="term" value="C:plasma membrane"/>
    <property type="evidence" value="ECO:0007669"/>
    <property type="project" value="UniProtKB-SubCell"/>
</dbReference>
<dbReference type="GO" id="GO:0008932">
    <property type="term" value="F:lytic endotransglycosylase activity"/>
    <property type="evidence" value="ECO:0000314"/>
    <property type="project" value="EcoCyc"/>
</dbReference>
<dbReference type="GO" id="GO:0008933">
    <property type="term" value="F:peptidoglycan lytic transglycosylase activity"/>
    <property type="evidence" value="ECO:0000314"/>
    <property type="project" value="EcoCyc"/>
</dbReference>
<dbReference type="GO" id="GO:0071555">
    <property type="term" value="P:cell wall organization"/>
    <property type="evidence" value="ECO:0007669"/>
    <property type="project" value="UniProtKB-KW"/>
</dbReference>
<dbReference type="GO" id="GO:0000270">
    <property type="term" value="P:peptidoglycan metabolic process"/>
    <property type="evidence" value="ECO:0000314"/>
    <property type="project" value="EcoCyc"/>
</dbReference>
<dbReference type="CDD" id="cd00118">
    <property type="entry name" value="LysM"/>
    <property type="match status" value="2"/>
</dbReference>
<dbReference type="CDD" id="cd16894">
    <property type="entry name" value="MltD-like"/>
    <property type="match status" value="1"/>
</dbReference>
<dbReference type="FunFam" id="1.10.530.10:FF:000004">
    <property type="entry name" value="Membrane-bound lytic murein transglycosylase D"/>
    <property type="match status" value="1"/>
</dbReference>
<dbReference type="FunFam" id="3.10.350.10:FF:000003">
    <property type="entry name" value="Membrane-bound lytic murein transglycosylase D"/>
    <property type="match status" value="1"/>
</dbReference>
<dbReference type="FunFam" id="3.10.350.10:FF:000004">
    <property type="entry name" value="Membrane-bound lytic murein transglycosylase D"/>
    <property type="match status" value="1"/>
</dbReference>
<dbReference type="Gene3D" id="1.10.530.10">
    <property type="match status" value="1"/>
</dbReference>
<dbReference type="Gene3D" id="3.10.350.10">
    <property type="entry name" value="LysM domain"/>
    <property type="match status" value="2"/>
</dbReference>
<dbReference type="InterPro" id="IPR018392">
    <property type="entry name" value="LysM_dom"/>
</dbReference>
<dbReference type="InterPro" id="IPR036779">
    <property type="entry name" value="LysM_dom_sf"/>
</dbReference>
<dbReference type="InterPro" id="IPR023346">
    <property type="entry name" value="Lysozyme-like_dom_sf"/>
</dbReference>
<dbReference type="InterPro" id="IPR000189">
    <property type="entry name" value="Transglyc_AS"/>
</dbReference>
<dbReference type="InterPro" id="IPR008258">
    <property type="entry name" value="Transglycosylase_SLT_dom_1"/>
</dbReference>
<dbReference type="NCBIfam" id="NF008050">
    <property type="entry name" value="PRK10783.1"/>
    <property type="match status" value="1"/>
</dbReference>
<dbReference type="PANTHER" id="PTHR33734">
    <property type="entry name" value="LYSM DOMAIN-CONTAINING GPI-ANCHORED PROTEIN 2"/>
    <property type="match status" value="1"/>
</dbReference>
<dbReference type="PANTHER" id="PTHR33734:SF22">
    <property type="entry name" value="MEMBRANE-BOUND LYTIC MUREIN TRANSGLYCOSYLASE D"/>
    <property type="match status" value="1"/>
</dbReference>
<dbReference type="Pfam" id="PF01476">
    <property type="entry name" value="LysM"/>
    <property type="match status" value="2"/>
</dbReference>
<dbReference type="Pfam" id="PF01464">
    <property type="entry name" value="SLT"/>
    <property type="match status" value="1"/>
</dbReference>
<dbReference type="SMART" id="SM00257">
    <property type="entry name" value="LysM"/>
    <property type="match status" value="2"/>
</dbReference>
<dbReference type="SUPFAM" id="SSF54106">
    <property type="entry name" value="LysM domain"/>
    <property type="match status" value="2"/>
</dbReference>
<dbReference type="SUPFAM" id="SSF53955">
    <property type="entry name" value="Lysozyme-like"/>
    <property type="match status" value="1"/>
</dbReference>
<dbReference type="PROSITE" id="PS51782">
    <property type="entry name" value="LYSM"/>
    <property type="match status" value="2"/>
</dbReference>
<dbReference type="PROSITE" id="PS51257">
    <property type="entry name" value="PROKAR_LIPOPROTEIN"/>
    <property type="match status" value="1"/>
</dbReference>
<dbReference type="PROSITE" id="PS00922">
    <property type="entry name" value="TRANSGLYCOSYLASE"/>
    <property type="match status" value="1"/>
</dbReference>
<accession>P0AEZ7</accession>
<accession>P23931</accession>
<accession>P32982</accession>
<accession>P77350</accession>
<organism>
    <name type="scientific">Escherichia coli (strain K12)</name>
    <dbReference type="NCBI Taxonomy" id="83333"/>
    <lineage>
        <taxon>Bacteria</taxon>
        <taxon>Pseudomonadati</taxon>
        <taxon>Pseudomonadota</taxon>
        <taxon>Gammaproteobacteria</taxon>
        <taxon>Enterobacterales</taxon>
        <taxon>Enterobacteriaceae</taxon>
        <taxon>Escherichia</taxon>
    </lineage>
</organism>
<keyword id="KW-0002">3D-structure</keyword>
<keyword id="KW-1003">Cell membrane</keyword>
<keyword id="KW-0961">Cell wall biogenesis/degradation</keyword>
<keyword id="KW-0449">Lipoprotein</keyword>
<keyword id="KW-0456">Lyase</keyword>
<keyword id="KW-0472">Membrane</keyword>
<keyword id="KW-0564">Palmitate</keyword>
<keyword id="KW-1185">Reference proteome</keyword>
<keyword id="KW-0677">Repeat</keyword>
<keyword id="KW-0732">Signal</keyword>
<gene>
    <name type="primary">mltD</name>
    <name type="synonym">dniR</name>
    <name type="synonym">yafG</name>
    <name type="ordered locus">b0211</name>
    <name type="ordered locus">JW5018</name>
</gene>
<name>MLTD_ECOLI</name>
<evidence type="ECO:0000250" key="1"/>
<evidence type="ECO:0000255" key="2">
    <source>
        <dbReference type="PROSITE-ProRule" id="PRU00303"/>
    </source>
</evidence>
<evidence type="ECO:0000255" key="3">
    <source>
        <dbReference type="PROSITE-ProRule" id="PRU01118"/>
    </source>
</evidence>
<evidence type="ECO:0000255" key="4">
    <source>
        <dbReference type="PROSITE-ProRule" id="PRU10071"/>
    </source>
</evidence>
<evidence type="ECO:0000305" key="5"/>
<evidence type="ECO:0000305" key="6">
    <source>
    </source>
</evidence>
<evidence type="ECO:0007829" key="7">
    <source>
        <dbReference type="PDB" id="1E0G"/>
    </source>
</evidence>
<reference key="1">
    <citation type="submission" date="1996-02" db="EMBL/GenBank/DDBJ databases">
        <title>Systematic sequencing of the Escherichia coli genome: analysis of the 4.0 - 6.0 min (189,987 - 281,416bp) region.</title>
        <authorList>
            <person name="Takemoto K."/>
            <person name="Mori H."/>
            <person name="Murayama N."/>
            <person name="Kataoka K."/>
            <person name="Yano M."/>
            <person name="Itoh T."/>
            <person name="Yamamoto Y."/>
            <person name="Inokuchi H."/>
            <person name="Miki T."/>
            <person name="Hatada E."/>
            <person name="Fukuda R."/>
            <person name="Ichihara S."/>
            <person name="Mizuno T."/>
            <person name="Makino K."/>
            <person name="Nakata A."/>
            <person name="Yura T."/>
            <person name="Sampei G."/>
            <person name="Mizobuchi K."/>
        </authorList>
    </citation>
    <scope>NUCLEOTIDE SEQUENCE [LARGE SCALE GENOMIC DNA]</scope>
    <source>
        <strain>K12 / W3110 / ATCC 27325 / DSM 5911</strain>
    </source>
</reference>
<reference key="2">
    <citation type="submission" date="1997-01" db="EMBL/GenBank/DDBJ databases">
        <title>Sequence of minutes 4-25 of Escherichia coli.</title>
        <authorList>
            <person name="Chung E."/>
            <person name="Allen E."/>
            <person name="Araujo R."/>
            <person name="Aparicio A.M."/>
            <person name="Davis K."/>
            <person name="Duncan M."/>
            <person name="Federspiel N."/>
            <person name="Hyman R."/>
            <person name="Kalman S."/>
            <person name="Komp C."/>
            <person name="Kurdi O."/>
            <person name="Lew H."/>
            <person name="Lin D."/>
            <person name="Namath A."/>
            <person name="Oefner P."/>
            <person name="Roberts D."/>
            <person name="Schramm S."/>
            <person name="Davis R.W."/>
        </authorList>
    </citation>
    <scope>NUCLEOTIDE SEQUENCE [LARGE SCALE GENOMIC DNA]</scope>
    <source>
        <strain>K12 / MG1655 / ATCC 47076</strain>
    </source>
</reference>
<reference key="3">
    <citation type="journal article" date="1997" name="Science">
        <title>The complete genome sequence of Escherichia coli K-12.</title>
        <authorList>
            <person name="Blattner F.R."/>
            <person name="Plunkett G. III"/>
            <person name="Bloch C.A."/>
            <person name="Perna N.T."/>
            <person name="Burland V."/>
            <person name="Riley M."/>
            <person name="Collado-Vides J."/>
            <person name="Glasner J.D."/>
            <person name="Rode C.K."/>
            <person name="Mayhew G.F."/>
            <person name="Gregor J."/>
            <person name="Davis N.W."/>
            <person name="Kirkpatrick H.A."/>
            <person name="Goeden M.A."/>
            <person name="Rose D.J."/>
            <person name="Mau B."/>
            <person name="Shao Y."/>
        </authorList>
    </citation>
    <scope>NUCLEOTIDE SEQUENCE [LARGE SCALE GENOMIC DNA]</scope>
    <source>
        <strain>K12 / MG1655 / ATCC 47076</strain>
    </source>
</reference>
<reference key="4">
    <citation type="journal article" date="2006" name="Mol. Syst. Biol.">
        <title>Highly accurate genome sequences of Escherichia coli K-12 strains MG1655 and W3110.</title>
        <authorList>
            <person name="Hayashi K."/>
            <person name="Morooka N."/>
            <person name="Yamamoto Y."/>
            <person name="Fujita K."/>
            <person name="Isono K."/>
            <person name="Choi S."/>
            <person name="Ohtsubo E."/>
            <person name="Baba T."/>
            <person name="Wanner B.L."/>
            <person name="Mori H."/>
            <person name="Horiuchi T."/>
        </authorList>
    </citation>
    <scope>NUCLEOTIDE SEQUENCE [LARGE SCALE GENOMIC DNA]</scope>
    <source>
        <strain>K12 / W3110 / ATCC 27325 / DSM 5911</strain>
    </source>
</reference>
<reference key="5">
    <citation type="journal article" date="1991" name="FEMS Microbiol. Lett.">
        <title>Molecular cloning and DNA sequence of dniR, a gene affecting anaerobic expression of the Escherichia coli hexaheme nitrite reductase.</title>
        <authorList>
            <person name="Kajie S."/>
            <person name="Ideta R."/>
            <person name="Yamato I."/>
            <person name="Anraku Y."/>
        </authorList>
    </citation>
    <scope>NUCLEOTIDE SEQUENCE [GENOMIC DNA] OF 35-452</scope>
    <source>
        <strain>K12</strain>
    </source>
</reference>
<reference key="6">
    <citation type="journal article" date="1994" name="Trends Biochem. Sci.">
        <title>A conserved domain in putative bacterial and bacteriophage transglycosylases.</title>
        <authorList>
            <person name="Koonin E.V."/>
            <person name="Rudd K.E."/>
        </authorList>
    </citation>
    <scope>SIMILARITY TO SLT</scope>
</reference>
<reference key="7">
    <citation type="journal article" date="2000" name="J. Mol. Biol.">
        <title>The structure of a LysM domain from E. coli membrane-bound lytic murein transglycosylase D (MltD).</title>
        <authorList>
            <person name="Bateman A."/>
            <person name="Bycroft M."/>
        </authorList>
    </citation>
    <scope>STRUCTURE BY NMR OF 398-445</scope>
</reference>
<proteinExistence type="evidence at protein level"/>